<accession>Q9USH0</accession>
<evidence type="ECO:0000255" key="1"/>
<evidence type="ECO:0000305" key="2"/>
<proteinExistence type="inferred from homology"/>
<gene>
    <name type="ORF">SPCP31B10.04</name>
</gene>
<organism>
    <name type="scientific">Schizosaccharomyces pombe (strain 972 / ATCC 24843)</name>
    <name type="common">Fission yeast</name>
    <dbReference type="NCBI Taxonomy" id="284812"/>
    <lineage>
        <taxon>Eukaryota</taxon>
        <taxon>Fungi</taxon>
        <taxon>Dikarya</taxon>
        <taxon>Ascomycota</taxon>
        <taxon>Taphrinomycotina</taxon>
        <taxon>Schizosaccharomycetes</taxon>
        <taxon>Schizosaccharomycetales</taxon>
        <taxon>Schizosaccharomycetaceae</taxon>
        <taxon>Schizosaccharomyces</taxon>
    </lineage>
</organism>
<comment type="subcellular location">
    <subcellularLocation>
        <location evidence="2">Membrane</location>
        <topology evidence="2">Single-pass membrane protein</topology>
    </subcellularLocation>
</comment>
<dbReference type="EMBL" id="CU329672">
    <property type="protein sequence ID" value="CAB58370.1"/>
    <property type="molecule type" value="Genomic_DNA"/>
</dbReference>
<dbReference type="PIR" id="T41694">
    <property type="entry name" value="T41694"/>
</dbReference>
<dbReference type="BioGRID" id="276013">
    <property type="interactions" value="8"/>
</dbReference>
<dbReference type="iPTMnet" id="Q9USH0"/>
<dbReference type="PaxDb" id="4896-SPCP31B10.04.1"/>
<dbReference type="EnsemblFungi" id="SPCP31B10.04.1">
    <property type="protein sequence ID" value="SPCP31B10.04.1:pep"/>
    <property type="gene ID" value="SPCP31B10.04"/>
</dbReference>
<dbReference type="KEGG" id="spo:2539450"/>
<dbReference type="PomBase" id="SPCP31B10.04"/>
<dbReference type="VEuPathDB" id="FungiDB:SPCP31B10.04"/>
<dbReference type="eggNOG" id="ENOG502SBE4">
    <property type="taxonomic scope" value="Eukaryota"/>
</dbReference>
<dbReference type="HOGENOM" id="CLU_980578_0_0_1"/>
<dbReference type="InParanoid" id="Q9USH0"/>
<dbReference type="OMA" id="YNCHPQK"/>
<dbReference type="PRO" id="PR:Q9USH0"/>
<dbReference type="Proteomes" id="UP000002485">
    <property type="component" value="Chromosome III"/>
</dbReference>
<dbReference type="GO" id="GO:0005794">
    <property type="term" value="C:Golgi apparatus"/>
    <property type="evidence" value="ECO:0000266"/>
    <property type="project" value="PomBase"/>
</dbReference>
<dbReference type="GO" id="GO:0016020">
    <property type="term" value="C:membrane"/>
    <property type="evidence" value="ECO:0007669"/>
    <property type="project" value="UniProtKB-SubCell"/>
</dbReference>
<dbReference type="GO" id="GO:0006888">
    <property type="term" value="P:endoplasmic reticulum to Golgi vesicle-mediated transport"/>
    <property type="evidence" value="ECO:0000255"/>
    <property type="project" value="PomBase"/>
</dbReference>
<dbReference type="InterPro" id="IPR028000">
    <property type="entry name" value="Pma1"/>
</dbReference>
<dbReference type="Pfam" id="PF14610">
    <property type="entry name" value="Psg1"/>
    <property type="match status" value="1"/>
</dbReference>
<feature type="signal peptide" evidence="1">
    <location>
        <begin position="1"/>
        <end position="20"/>
    </location>
</feature>
<feature type="chain" id="PRO_0000353807" description="Uncharacterized membrane protein P31B10.04">
    <location>
        <begin position="21"/>
        <end position="287"/>
    </location>
</feature>
<feature type="topological domain" description="Extracellular" evidence="1">
    <location>
        <begin position="22"/>
        <end position="201"/>
    </location>
</feature>
<feature type="transmembrane region" description="Helical" evidence="1">
    <location>
        <begin position="202"/>
        <end position="222"/>
    </location>
</feature>
<feature type="topological domain" description="Cytoplasmic" evidence="1">
    <location>
        <begin position="223"/>
        <end position="287"/>
    </location>
</feature>
<feature type="glycosylation site" description="N-linked (GlcNAc...) asparagine" evidence="1">
    <location>
        <position position="120"/>
    </location>
</feature>
<feature type="glycosylation site" description="N-linked (GlcNAc...) asparagine" evidence="1">
    <location>
        <position position="154"/>
    </location>
</feature>
<feature type="glycosylation site" description="N-linked (GlcNAc...) asparagine" evidence="1">
    <location>
        <position position="166"/>
    </location>
</feature>
<keyword id="KW-0325">Glycoprotein</keyword>
<keyword id="KW-0472">Membrane</keyword>
<keyword id="KW-1185">Reference proteome</keyword>
<keyword id="KW-0732">Signal</keyword>
<keyword id="KW-0812">Transmembrane</keyword>
<keyword id="KW-1133">Transmembrane helix</keyword>
<reference key="1">
    <citation type="journal article" date="2002" name="Nature">
        <title>The genome sequence of Schizosaccharomyces pombe.</title>
        <authorList>
            <person name="Wood V."/>
            <person name="Gwilliam R."/>
            <person name="Rajandream M.A."/>
            <person name="Lyne M.H."/>
            <person name="Lyne R."/>
            <person name="Stewart A."/>
            <person name="Sgouros J.G."/>
            <person name="Peat N."/>
            <person name="Hayles J."/>
            <person name="Baker S.G."/>
            <person name="Basham D."/>
            <person name="Bowman S."/>
            <person name="Brooks K."/>
            <person name="Brown D."/>
            <person name="Brown S."/>
            <person name="Chillingworth T."/>
            <person name="Churcher C.M."/>
            <person name="Collins M."/>
            <person name="Connor R."/>
            <person name="Cronin A."/>
            <person name="Davis P."/>
            <person name="Feltwell T."/>
            <person name="Fraser A."/>
            <person name="Gentles S."/>
            <person name="Goble A."/>
            <person name="Hamlin N."/>
            <person name="Harris D.E."/>
            <person name="Hidalgo J."/>
            <person name="Hodgson G."/>
            <person name="Holroyd S."/>
            <person name="Hornsby T."/>
            <person name="Howarth S."/>
            <person name="Huckle E.J."/>
            <person name="Hunt S."/>
            <person name="Jagels K."/>
            <person name="James K.D."/>
            <person name="Jones L."/>
            <person name="Jones M."/>
            <person name="Leather S."/>
            <person name="McDonald S."/>
            <person name="McLean J."/>
            <person name="Mooney P."/>
            <person name="Moule S."/>
            <person name="Mungall K.L."/>
            <person name="Murphy L.D."/>
            <person name="Niblett D."/>
            <person name="Odell C."/>
            <person name="Oliver K."/>
            <person name="O'Neil S."/>
            <person name="Pearson D."/>
            <person name="Quail M.A."/>
            <person name="Rabbinowitsch E."/>
            <person name="Rutherford K.M."/>
            <person name="Rutter S."/>
            <person name="Saunders D."/>
            <person name="Seeger K."/>
            <person name="Sharp S."/>
            <person name="Skelton J."/>
            <person name="Simmonds M.N."/>
            <person name="Squares R."/>
            <person name="Squares S."/>
            <person name="Stevens K."/>
            <person name="Taylor K."/>
            <person name="Taylor R.G."/>
            <person name="Tivey A."/>
            <person name="Walsh S.V."/>
            <person name="Warren T."/>
            <person name="Whitehead S."/>
            <person name="Woodward J.R."/>
            <person name="Volckaert G."/>
            <person name="Aert R."/>
            <person name="Robben J."/>
            <person name="Grymonprez B."/>
            <person name="Weltjens I."/>
            <person name="Vanstreels E."/>
            <person name="Rieger M."/>
            <person name="Schaefer M."/>
            <person name="Mueller-Auer S."/>
            <person name="Gabel C."/>
            <person name="Fuchs M."/>
            <person name="Duesterhoeft A."/>
            <person name="Fritzc C."/>
            <person name="Holzer E."/>
            <person name="Moestl D."/>
            <person name="Hilbert H."/>
            <person name="Borzym K."/>
            <person name="Langer I."/>
            <person name="Beck A."/>
            <person name="Lehrach H."/>
            <person name="Reinhardt R."/>
            <person name="Pohl T.M."/>
            <person name="Eger P."/>
            <person name="Zimmermann W."/>
            <person name="Wedler H."/>
            <person name="Wambutt R."/>
            <person name="Purnelle B."/>
            <person name="Goffeau A."/>
            <person name="Cadieu E."/>
            <person name="Dreano S."/>
            <person name="Gloux S."/>
            <person name="Lelaure V."/>
            <person name="Mottier S."/>
            <person name="Galibert F."/>
            <person name="Aves S.J."/>
            <person name="Xiang Z."/>
            <person name="Hunt C."/>
            <person name="Moore K."/>
            <person name="Hurst S.M."/>
            <person name="Lucas M."/>
            <person name="Rochet M."/>
            <person name="Gaillardin C."/>
            <person name="Tallada V.A."/>
            <person name="Garzon A."/>
            <person name="Thode G."/>
            <person name="Daga R.R."/>
            <person name="Cruzado L."/>
            <person name="Jimenez J."/>
            <person name="Sanchez M."/>
            <person name="del Rey F."/>
            <person name="Benito J."/>
            <person name="Dominguez A."/>
            <person name="Revuelta J.L."/>
            <person name="Moreno S."/>
            <person name="Armstrong J."/>
            <person name="Forsburg S.L."/>
            <person name="Cerutti L."/>
            <person name="Lowe T."/>
            <person name="McCombie W.R."/>
            <person name="Paulsen I."/>
            <person name="Potashkin J."/>
            <person name="Shpakovski G.V."/>
            <person name="Ussery D."/>
            <person name="Barrell B.G."/>
            <person name="Nurse P."/>
        </authorList>
    </citation>
    <scope>NUCLEOTIDE SEQUENCE [LARGE SCALE GENOMIC DNA]</scope>
    <source>
        <strain>972 / ATCC 24843</strain>
    </source>
</reference>
<protein>
    <recommendedName>
        <fullName>Uncharacterized membrane protein P31B10.04</fullName>
    </recommendedName>
</protein>
<sequence>MKVICGSVFLFSLFFQVVLGDYFSSSSGNPNLRTTKVYTVVSGTHLATAESTVSKTITTTKGLPTNAYYNCVPSKYIQSDIPMCAPNQGDRWVKGRKYKVSWDPLYFGVDNLLMVVSYLNDSGLIAATKKVQNSKGEIMLKANKGWLHDDSFQNVTIDLVTISENNMTLLTGPRILLAKDLDSATAAAENAAFYGPRRNIKAAIAVPSVILGLILVALVYYAYRKDTWKIYMAKIRIRRSAPGYGVRRSRRQRMQSRPVAYTSLPADAHFEDSDDEDYYQSQVKKFH</sequence>
<name>YJH4_SCHPO</name>